<name>ALG8_DICDI</name>
<dbReference type="EC" id="2.4.1.265" evidence="1"/>
<dbReference type="EMBL" id="AAFI02000013">
    <property type="protein sequence ID" value="EAL69911.1"/>
    <property type="molecule type" value="Genomic_DNA"/>
</dbReference>
<dbReference type="RefSeq" id="XP_643769.1">
    <property type="nucleotide sequence ID" value="XM_638677.1"/>
</dbReference>
<dbReference type="SMR" id="Q554E2"/>
<dbReference type="FunCoup" id="Q554E2">
    <property type="interactions" value="661"/>
</dbReference>
<dbReference type="STRING" id="44689.Q554E2"/>
<dbReference type="CAZy" id="GT57">
    <property type="family name" value="Glycosyltransferase Family 57"/>
</dbReference>
<dbReference type="PaxDb" id="44689-DDB0231452"/>
<dbReference type="EnsemblProtists" id="EAL69911">
    <property type="protein sequence ID" value="EAL69911"/>
    <property type="gene ID" value="DDB_G0275261"/>
</dbReference>
<dbReference type="GeneID" id="8619814"/>
<dbReference type="KEGG" id="ddi:DDB_G0275261"/>
<dbReference type="dictyBase" id="DDB_G0275261">
    <property type="gene designation" value="alg8"/>
</dbReference>
<dbReference type="VEuPathDB" id="AmoebaDB:DDB_G0275261"/>
<dbReference type="eggNOG" id="KOG2576">
    <property type="taxonomic scope" value="Eukaryota"/>
</dbReference>
<dbReference type="HOGENOM" id="CLU_022045_1_1_1"/>
<dbReference type="InParanoid" id="Q554E2"/>
<dbReference type="OMA" id="YLAPPFG"/>
<dbReference type="PhylomeDB" id="Q554E2"/>
<dbReference type="Reactome" id="R-DDI-446193">
    <property type="pathway name" value="Biosynthesis of the N-glycan precursor (dolichol lipid-linked oligosaccharide, LLO) and transfer to a nascent protein"/>
</dbReference>
<dbReference type="UniPathway" id="UPA00378"/>
<dbReference type="PRO" id="PR:Q554E2"/>
<dbReference type="Proteomes" id="UP000002195">
    <property type="component" value="Chromosome 2"/>
</dbReference>
<dbReference type="GO" id="GO:0005789">
    <property type="term" value="C:endoplasmic reticulum membrane"/>
    <property type="evidence" value="ECO:0000250"/>
    <property type="project" value="UniProtKB"/>
</dbReference>
<dbReference type="GO" id="GO:0042283">
    <property type="term" value="F:dolichyl pyrophosphate Glc1Man9GlcNAc2 alpha-1,3-glucosyltransferase activity"/>
    <property type="evidence" value="ECO:0000250"/>
    <property type="project" value="dictyBase"/>
</dbReference>
<dbReference type="GO" id="GO:0006488">
    <property type="term" value="P:dolichol-linked oligosaccharide biosynthetic process"/>
    <property type="evidence" value="ECO:0000250"/>
    <property type="project" value="UniProtKB"/>
</dbReference>
<dbReference type="GO" id="GO:0006487">
    <property type="term" value="P:protein N-linked glycosylation"/>
    <property type="evidence" value="ECO:0000250"/>
    <property type="project" value="UniProtKB"/>
</dbReference>
<dbReference type="InterPro" id="IPR004856">
    <property type="entry name" value="Glyco_trans_ALG6/ALG8"/>
</dbReference>
<dbReference type="PANTHER" id="PTHR12413">
    <property type="entry name" value="DOLICHYL GLYCOSYLTRANSFERASE"/>
    <property type="match status" value="1"/>
</dbReference>
<dbReference type="PANTHER" id="PTHR12413:SF2">
    <property type="entry name" value="DOLICHYL PYROPHOSPHATE GLC1MAN9GLCNAC2 ALPHA-1,3-GLUCOSYLTRANSFERASE-RELATED"/>
    <property type="match status" value="1"/>
</dbReference>
<dbReference type="Pfam" id="PF03155">
    <property type="entry name" value="Alg6_Alg8"/>
    <property type="match status" value="2"/>
</dbReference>
<sequence>MIKKNNNSNNNNNNPIIIKDGTNCFFKEIKDVLKFSRNWNLIILVSTIKLLLIPSYLSTDFEVHRNWLAITSSLPISKWYFENTSEWTLDYPPFFGWFEYFLSKFAYYIDSEMLVIDNLGYKSTSTILFQRFSVIISDSLFILSTLLLSNYIYNIIIKKNNNKNNNNNNNNNNNNNNNNNNNNNNNNNNNNNNNNNLHWYHDKSFIISSIIILNPGLLMVDHIHFQYNGFLKGILILSIYFLVRGNILIGSILFSVLLNFKHIYMYMAPAFFVYLLKYYCLKSNLNDNTTSKVNHSKQQQQQEFTIFGIKIFNLIKLGISVLSIFLISLGPFFYMGQIQQLISRLFPFGRGLSHAYWAPNFWSIYNFLDRVLLFNGLYKKIPFFKNFIIPDQVTGNLTSGLVGSETQSHILLPKITPQITLLITILFLIPSIYSILKSKSWKHFILGICQSSFTFFMFGWHVHEKAIIMITIPMGFLCLVNNKFSKLYFLLSTIGHYSLFPLLFQVEEIPTRILILVTYTLLVYLSFISSSSNNNNNNNNNNNNSNNNNSKQRKCSFSLGLYWFEKFYLFGIILLEIFNVFIHPVFLAHIERFSFISLMITSVYTSVGIIYCYLFTFKLIFKNEY</sequence>
<gene>
    <name type="primary">alg8</name>
    <name type="ORF">DDB_G0275261</name>
</gene>
<proteinExistence type="inferred from homology"/>
<organism>
    <name type="scientific">Dictyostelium discoideum</name>
    <name type="common">Social amoeba</name>
    <dbReference type="NCBI Taxonomy" id="44689"/>
    <lineage>
        <taxon>Eukaryota</taxon>
        <taxon>Amoebozoa</taxon>
        <taxon>Evosea</taxon>
        <taxon>Eumycetozoa</taxon>
        <taxon>Dictyostelia</taxon>
        <taxon>Dictyosteliales</taxon>
        <taxon>Dictyosteliaceae</taxon>
        <taxon>Dictyostelium</taxon>
    </lineage>
</organism>
<reference key="1">
    <citation type="journal article" date="2002" name="Nature">
        <title>Sequence and analysis of chromosome 2 of Dictyostelium discoideum.</title>
        <authorList>
            <person name="Gloeckner G."/>
            <person name="Eichinger L."/>
            <person name="Szafranski K."/>
            <person name="Pachebat J.A."/>
            <person name="Bankier A.T."/>
            <person name="Dear P.H."/>
            <person name="Lehmann R."/>
            <person name="Baumgart C."/>
            <person name="Parra G."/>
            <person name="Abril J.F."/>
            <person name="Guigo R."/>
            <person name="Kumpf K."/>
            <person name="Tunggal B."/>
            <person name="Cox E.C."/>
            <person name="Quail M.A."/>
            <person name="Platzer M."/>
            <person name="Rosenthal A."/>
            <person name="Noegel A.A."/>
        </authorList>
    </citation>
    <scope>NUCLEOTIDE SEQUENCE [LARGE SCALE GENOMIC DNA]</scope>
    <source>
        <strain>AX4</strain>
    </source>
</reference>
<reference key="2">
    <citation type="journal article" date="2005" name="Nature">
        <title>The genome of the social amoeba Dictyostelium discoideum.</title>
        <authorList>
            <person name="Eichinger L."/>
            <person name="Pachebat J.A."/>
            <person name="Gloeckner G."/>
            <person name="Rajandream M.A."/>
            <person name="Sucgang R."/>
            <person name="Berriman M."/>
            <person name="Song J."/>
            <person name="Olsen R."/>
            <person name="Szafranski K."/>
            <person name="Xu Q."/>
            <person name="Tunggal B."/>
            <person name="Kummerfeld S."/>
            <person name="Madera M."/>
            <person name="Konfortov B.A."/>
            <person name="Rivero F."/>
            <person name="Bankier A.T."/>
            <person name="Lehmann R."/>
            <person name="Hamlin N."/>
            <person name="Davies R."/>
            <person name="Gaudet P."/>
            <person name="Fey P."/>
            <person name="Pilcher K."/>
            <person name="Chen G."/>
            <person name="Saunders D."/>
            <person name="Sodergren E.J."/>
            <person name="Davis P."/>
            <person name="Kerhornou A."/>
            <person name="Nie X."/>
            <person name="Hall N."/>
            <person name="Anjard C."/>
            <person name="Hemphill L."/>
            <person name="Bason N."/>
            <person name="Farbrother P."/>
            <person name="Desany B."/>
            <person name="Just E."/>
            <person name="Morio T."/>
            <person name="Rost R."/>
            <person name="Churcher C.M."/>
            <person name="Cooper J."/>
            <person name="Haydock S."/>
            <person name="van Driessche N."/>
            <person name="Cronin A."/>
            <person name="Goodhead I."/>
            <person name="Muzny D.M."/>
            <person name="Mourier T."/>
            <person name="Pain A."/>
            <person name="Lu M."/>
            <person name="Harper D."/>
            <person name="Lindsay R."/>
            <person name="Hauser H."/>
            <person name="James K.D."/>
            <person name="Quiles M."/>
            <person name="Madan Babu M."/>
            <person name="Saito T."/>
            <person name="Buchrieser C."/>
            <person name="Wardroper A."/>
            <person name="Felder M."/>
            <person name="Thangavelu M."/>
            <person name="Johnson D."/>
            <person name="Knights A."/>
            <person name="Loulseged H."/>
            <person name="Mungall K.L."/>
            <person name="Oliver K."/>
            <person name="Price C."/>
            <person name="Quail M.A."/>
            <person name="Urushihara H."/>
            <person name="Hernandez J."/>
            <person name="Rabbinowitsch E."/>
            <person name="Steffen D."/>
            <person name="Sanders M."/>
            <person name="Ma J."/>
            <person name="Kohara Y."/>
            <person name="Sharp S."/>
            <person name="Simmonds M.N."/>
            <person name="Spiegler S."/>
            <person name="Tivey A."/>
            <person name="Sugano S."/>
            <person name="White B."/>
            <person name="Walker D."/>
            <person name="Woodward J.R."/>
            <person name="Winckler T."/>
            <person name="Tanaka Y."/>
            <person name="Shaulsky G."/>
            <person name="Schleicher M."/>
            <person name="Weinstock G.M."/>
            <person name="Rosenthal A."/>
            <person name="Cox E.C."/>
            <person name="Chisholm R.L."/>
            <person name="Gibbs R.A."/>
            <person name="Loomis W.F."/>
            <person name="Platzer M."/>
            <person name="Kay R.R."/>
            <person name="Williams J.G."/>
            <person name="Dear P.H."/>
            <person name="Noegel A.A."/>
            <person name="Barrell B.G."/>
            <person name="Kuspa A."/>
        </authorList>
    </citation>
    <scope>NUCLEOTIDE SEQUENCE [LARGE SCALE GENOMIC DNA]</scope>
    <source>
        <strain>AX4</strain>
    </source>
</reference>
<feature type="chain" id="PRO_0000327820" description="Dolichyl pyrophosphate Glc1Man9GlcNAc2 alpha-1,3-glucosyltransferase">
    <location>
        <begin position="1"/>
        <end position="625"/>
    </location>
</feature>
<feature type="transmembrane region" description="Helical" evidence="2">
    <location>
        <begin position="41"/>
        <end position="61"/>
    </location>
</feature>
<feature type="transmembrane region" description="Helical" evidence="2">
    <location>
        <begin position="132"/>
        <end position="152"/>
    </location>
</feature>
<feature type="transmembrane region" description="Helical" evidence="2">
    <location>
        <begin position="205"/>
        <end position="225"/>
    </location>
</feature>
<feature type="transmembrane region" description="Helical" evidence="2">
    <location>
        <begin position="234"/>
        <end position="254"/>
    </location>
</feature>
<feature type="transmembrane region" description="Helical" evidence="2">
    <location>
        <begin position="256"/>
        <end position="276"/>
    </location>
</feature>
<feature type="transmembrane region" description="Helical" evidence="2">
    <location>
        <begin position="314"/>
        <end position="334"/>
    </location>
</feature>
<feature type="transmembrane region" description="Helical" evidence="2">
    <location>
        <begin position="415"/>
        <end position="435"/>
    </location>
</feature>
<feature type="transmembrane region" description="Helical" evidence="2">
    <location>
        <begin position="453"/>
        <end position="473"/>
    </location>
</feature>
<feature type="transmembrane region" description="Helical" evidence="2">
    <location>
        <begin position="484"/>
        <end position="504"/>
    </location>
</feature>
<feature type="transmembrane region" description="Helical" evidence="2">
    <location>
        <begin position="509"/>
        <end position="529"/>
    </location>
</feature>
<feature type="transmembrane region" description="Helical" evidence="2">
    <location>
        <begin position="567"/>
        <end position="587"/>
    </location>
</feature>
<feature type="transmembrane region" description="Helical" evidence="2">
    <location>
        <begin position="595"/>
        <end position="615"/>
    </location>
</feature>
<feature type="region of interest" description="Disordered" evidence="3">
    <location>
        <begin position="163"/>
        <end position="194"/>
    </location>
</feature>
<protein>
    <recommendedName>
        <fullName evidence="1">Dolichyl pyrophosphate Glc1Man9GlcNAc2 alpha-1,3-glucosyltransferase</fullName>
        <ecNumber evidence="1">2.4.1.265</ecNumber>
    </recommendedName>
    <alternativeName>
        <fullName>Asparagine-linked glycosylation protein 8 homolog</fullName>
    </alternativeName>
    <alternativeName>
        <fullName>Dol-P-Glc:Glc(1)Man(9)GlcNAc(2)-PP-dolichyl alpha-1,3-glucosyltransferase</fullName>
    </alternativeName>
    <alternativeName>
        <fullName>Dolichyl-P-Glc:Glc1Man9GlcNAc2-PP-dolichyl glucosyltransferase</fullName>
    </alternativeName>
</protein>
<comment type="function">
    <text evidence="1">Dolichyl pyrophosphate Glc1Man9GlcNAc2 alpha-1,3-glucosyltransferase that operates in the biosynthetic pathway of dolichol-linked oligosaccharides, the glycan precursors employed in protein asparagine (N)-glycosylation. The assembly of dolichol-linked oligosaccharides begins on the cytosolic side of the endoplasmic reticulum membrane and finishes in its lumen. The sequential addition of sugars to dolichol pyrophosphate produces dolichol-linked oligosaccharides containing fourteen sugars, including two GlcNAcs, nine mannoses and three glucoses. Once assembled, the oligosaccharide is transferred from the lipid to nascent proteins by oligosaccharyltransferases. In the lumen of the endoplasmic reticulum, adds the second glucose residue from dolichyl phosphate glucose (Dol-P-Glc) onto the lipid-linked oligosaccharide intermediate Glc(1)Man(9)GlcNAc(2)-PP-Dol to produce Glc(2)Man(9)GlcNAc(2)-PP-Dol.</text>
</comment>
<comment type="catalytic activity">
    <reaction evidence="1">
        <text>an alpha-D-Glc-(1-&gt;3)-alpha-D-Man-(1-&gt;2)-alpha-D-Man-(1-&gt;2)-alpha-D-Man-(1-&gt;3)-[alpha-D-Man-(1-&gt;2)-alpha-D-Man-(1-&gt;3)-[alpha-D-Man-(1-&gt;2)-alpha-D-Man-(1-&gt;6)]-alpha-D-Man-(1-&gt;6)]-beta-D-Man-(1-&gt;4)-beta-D-GlcNAc-(1-&gt;4)-alpha-D-GlcNAc-diphospho-di-trans,poly-cis-dolichol + a di-trans,poly-cis-dolichyl beta-D-glucosyl phosphate = an alpha-D-Glc-(1-&gt;3)-alpha-D-Glc-(1-&gt;3)-alpha-D-Man-(1-&gt;2)-alpha-D-Man-(1-&gt;2)-alpha-D-Man-(1-&gt;3)-[alpha-D-Man-(1-&gt;2)-alpha-D-Man-(1-&gt;3)-[alpha-D-Man-(1-&gt;2)-alpha-D-Man-(1-&gt;6)]-alpha-D-Man-(1-&gt;6)]-beta-D-Man-(1-&gt;4)-beta-D-GlcNAc-(1-&gt;4)-alpha-D-GlcNAc-diphospho-di-trans,poly-cis-dolichol + a di-trans,poly-cis-dolichyl phosphate + H(+)</text>
        <dbReference type="Rhea" id="RHEA:31307"/>
        <dbReference type="Rhea" id="RHEA-COMP:19498"/>
        <dbReference type="Rhea" id="RHEA-COMP:19502"/>
        <dbReference type="Rhea" id="RHEA-COMP:19521"/>
        <dbReference type="Rhea" id="RHEA-COMP:19522"/>
        <dbReference type="ChEBI" id="CHEBI:15378"/>
        <dbReference type="ChEBI" id="CHEBI:57525"/>
        <dbReference type="ChEBI" id="CHEBI:57683"/>
        <dbReference type="ChEBI" id="CHEBI:132521"/>
        <dbReference type="ChEBI" id="CHEBI:132522"/>
        <dbReference type="EC" id="2.4.1.265"/>
    </reaction>
    <physiologicalReaction direction="left-to-right" evidence="1">
        <dbReference type="Rhea" id="RHEA:31308"/>
    </physiologicalReaction>
</comment>
<comment type="pathway">
    <text evidence="1">Protein modification; protein glycosylation.</text>
</comment>
<comment type="subcellular location">
    <subcellularLocation>
        <location evidence="1">Endoplasmic reticulum membrane</location>
        <topology evidence="2">Multi-pass membrane protein</topology>
    </subcellularLocation>
</comment>
<comment type="similarity">
    <text evidence="4">Belongs to the ALG6/ALG8 glucosyltransferase family.</text>
</comment>
<evidence type="ECO:0000250" key="1">
    <source>
        <dbReference type="UniProtKB" id="P40351"/>
    </source>
</evidence>
<evidence type="ECO:0000255" key="2"/>
<evidence type="ECO:0000256" key="3">
    <source>
        <dbReference type="SAM" id="MobiDB-lite"/>
    </source>
</evidence>
<evidence type="ECO:0000305" key="4"/>
<accession>Q554E2</accession>
<accession>Q869W2</accession>
<accession>Q86I13</accession>
<keyword id="KW-0256">Endoplasmic reticulum</keyword>
<keyword id="KW-0328">Glycosyltransferase</keyword>
<keyword id="KW-0472">Membrane</keyword>
<keyword id="KW-1185">Reference proteome</keyword>
<keyword id="KW-0808">Transferase</keyword>
<keyword id="KW-0812">Transmembrane</keyword>
<keyword id="KW-1133">Transmembrane helix</keyword>